<feature type="chain" id="PRO_0000303619" description="tRNA N6-adenosine threonylcarbamoyltransferase">
    <location>
        <begin position="1"/>
        <end position="354"/>
    </location>
</feature>
<feature type="binding site" evidence="1">
    <location>
        <position position="115"/>
    </location>
    <ligand>
        <name>Fe cation</name>
        <dbReference type="ChEBI" id="CHEBI:24875"/>
    </ligand>
</feature>
<feature type="binding site" evidence="1">
    <location>
        <position position="119"/>
    </location>
    <ligand>
        <name>Fe cation</name>
        <dbReference type="ChEBI" id="CHEBI:24875"/>
    </ligand>
</feature>
<feature type="binding site" evidence="1">
    <location>
        <begin position="138"/>
        <end position="142"/>
    </location>
    <ligand>
        <name>substrate</name>
    </ligand>
</feature>
<feature type="binding site" evidence="1">
    <location>
        <position position="171"/>
    </location>
    <ligand>
        <name>substrate</name>
    </ligand>
</feature>
<feature type="binding site" evidence="1">
    <location>
        <position position="184"/>
    </location>
    <ligand>
        <name>substrate</name>
    </ligand>
</feature>
<feature type="binding site" evidence="1">
    <location>
        <position position="276"/>
    </location>
    <ligand>
        <name>substrate</name>
    </ligand>
</feature>
<feature type="binding site" evidence="1">
    <location>
        <position position="304"/>
    </location>
    <ligand>
        <name>Fe cation</name>
        <dbReference type="ChEBI" id="CHEBI:24875"/>
    </ligand>
</feature>
<organism>
    <name type="scientific">Xanthomonas oryzae pv. oryzae (strain KACC10331 / KXO85)</name>
    <dbReference type="NCBI Taxonomy" id="291331"/>
    <lineage>
        <taxon>Bacteria</taxon>
        <taxon>Pseudomonadati</taxon>
        <taxon>Pseudomonadota</taxon>
        <taxon>Gammaproteobacteria</taxon>
        <taxon>Lysobacterales</taxon>
        <taxon>Lysobacteraceae</taxon>
        <taxon>Xanthomonas</taxon>
    </lineage>
</organism>
<dbReference type="EC" id="2.3.1.234" evidence="1"/>
<dbReference type="EMBL" id="AE013598">
    <property type="protein sequence ID" value="AAW77379.1"/>
    <property type="molecule type" value="Genomic_DNA"/>
</dbReference>
<dbReference type="SMR" id="Q5GV94"/>
<dbReference type="STRING" id="291331.XOO4125"/>
<dbReference type="KEGG" id="xoo:XOO4125"/>
<dbReference type="HOGENOM" id="CLU_023208_0_0_6"/>
<dbReference type="Proteomes" id="UP000006735">
    <property type="component" value="Chromosome"/>
</dbReference>
<dbReference type="GO" id="GO:0005737">
    <property type="term" value="C:cytoplasm"/>
    <property type="evidence" value="ECO:0007669"/>
    <property type="project" value="UniProtKB-SubCell"/>
</dbReference>
<dbReference type="GO" id="GO:0005506">
    <property type="term" value="F:iron ion binding"/>
    <property type="evidence" value="ECO:0007669"/>
    <property type="project" value="UniProtKB-UniRule"/>
</dbReference>
<dbReference type="GO" id="GO:0061711">
    <property type="term" value="F:N(6)-L-threonylcarbamoyladenine synthase activity"/>
    <property type="evidence" value="ECO:0007669"/>
    <property type="project" value="UniProtKB-EC"/>
</dbReference>
<dbReference type="GO" id="GO:0002949">
    <property type="term" value="P:tRNA threonylcarbamoyladenosine modification"/>
    <property type="evidence" value="ECO:0007669"/>
    <property type="project" value="UniProtKB-UniRule"/>
</dbReference>
<dbReference type="CDD" id="cd24133">
    <property type="entry name" value="ASKHA_NBD_TsaD_bac"/>
    <property type="match status" value="1"/>
</dbReference>
<dbReference type="FunFam" id="3.30.420.40:FF:000012">
    <property type="entry name" value="tRNA N6-adenosine threonylcarbamoyltransferase"/>
    <property type="match status" value="1"/>
</dbReference>
<dbReference type="FunFam" id="3.30.420.40:FF:000031">
    <property type="entry name" value="tRNA N6-adenosine threonylcarbamoyltransferase"/>
    <property type="match status" value="1"/>
</dbReference>
<dbReference type="Gene3D" id="3.30.420.40">
    <property type="match status" value="2"/>
</dbReference>
<dbReference type="HAMAP" id="MF_01445">
    <property type="entry name" value="TsaD"/>
    <property type="match status" value="1"/>
</dbReference>
<dbReference type="InterPro" id="IPR043129">
    <property type="entry name" value="ATPase_NBD"/>
</dbReference>
<dbReference type="InterPro" id="IPR000905">
    <property type="entry name" value="Gcp-like_dom"/>
</dbReference>
<dbReference type="InterPro" id="IPR017861">
    <property type="entry name" value="KAE1/TsaD"/>
</dbReference>
<dbReference type="InterPro" id="IPR017860">
    <property type="entry name" value="Peptidase_M22_CS"/>
</dbReference>
<dbReference type="InterPro" id="IPR022450">
    <property type="entry name" value="TsaD"/>
</dbReference>
<dbReference type="NCBIfam" id="TIGR00329">
    <property type="entry name" value="gcp_kae1"/>
    <property type="match status" value="1"/>
</dbReference>
<dbReference type="NCBIfam" id="TIGR03723">
    <property type="entry name" value="T6A_TsaD_YgjD"/>
    <property type="match status" value="1"/>
</dbReference>
<dbReference type="PANTHER" id="PTHR11735">
    <property type="entry name" value="TRNA N6-ADENOSINE THREONYLCARBAMOYLTRANSFERASE"/>
    <property type="match status" value="1"/>
</dbReference>
<dbReference type="PANTHER" id="PTHR11735:SF6">
    <property type="entry name" value="TRNA N6-ADENOSINE THREONYLCARBAMOYLTRANSFERASE, MITOCHONDRIAL"/>
    <property type="match status" value="1"/>
</dbReference>
<dbReference type="Pfam" id="PF00814">
    <property type="entry name" value="TsaD"/>
    <property type="match status" value="1"/>
</dbReference>
<dbReference type="PRINTS" id="PR00789">
    <property type="entry name" value="OSIALOPTASE"/>
</dbReference>
<dbReference type="SUPFAM" id="SSF53067">
    <property type="entry name" value="Actin-like ATPase domain"/>
    <property type="match status" value="2"/>
</dbReference>
<dbReference type="PROSITE" id="PS01016">
    <property type="entry name" value="GLYCOPROTEASE"/>
    <property type="match status" value="1"/>
</dbReference>
<protein>
    <recommendedName>
        <fullName evidence="1">tRNA N6-adenosine threonylcarbamoyltransferase</fullName>
        <ecNumber evidence="1">2.3.1.234</ecNumber>
    </recommendedName>
    <alternativeName>
        <fullName evidence="1">N6-L-threonylcarbamoyladenine synthase</fullName>
        <shortName evidence="1">t(6)A synthase</shortName>
    </alternativeName>
    <alternativeName>
        <fullName evidence="1">t(6)A37 threonylcarbamoyladenosine biosynthesis protein TsaD</fullName>
    </alternativeName>
    <alternativeName>
        <fullName evidence="1">tRNA threonylcarbamoyladenosine biosynthesis protein TsaD</fullName>
    </alternativeName>
</protein>
<reference key="1">
    <citation type="journal article" date="2005" name="Nucleic Acids Res.">
        <title>The genome sequence of Xanthomonas oryzae pathovar oryzae KACC10331, the bacterial blight pathogen of rice.</title>
        <authorList>
            <person name="Lee B.-M."/>
            <person name="Park Y.-J."/>
            <person name="Park D.-S."/>
            <person name="Kang H.-W."/>
            <person name="Kim J.-G."/>
            <person name="Song E.-S."/>
            <person name="Park I.-C."/>
            <person name="Yoon U.-H."/>
            <person name="Hahn J.-H."/>
            <person name="Koo B.-S."/>
            <person name="Lee G.-B."/>
            <person name="Kim H."/>
            <person name="Park H.-S."/>
            <person name="Yoon K.-O."/>
            <person name="Kim J.-H."/>
            <person name="Jung C.-H."/>
            <person name="Koh N.-H."/>
            <person name="Seo J.-S."/>
            <person name="Go S.-J."/>
        </authorList>
    </citation>
    <scope>NUCLEOTIDE SEQUENCE [LARGE SCALE GENOMIC DNA]</scope>
    <source>
        <strain>KACC10331 / KXO85</strain>
    </source>
</reference>
<evidence type="ECO:0000255" key="1">
    <source>
        <dbReference type="HAMAP-Rule" id="MF_01445"/>
    </source>
</evidence>
<comment type="function">
    <text evidence="1">Required for the formation of a threonylcarbamoyl group on adenosine at position 37 (t(6)A37) in tRNAs that read codons beginning with adenine. Is involved in the transfer of the threonylcarbamoyl moiety of threonylcarbamoyl-AMP (TC-AMP) to the N6 group of A37, together with TsaE and TsaB. TsaD likely plays a direct catalytic role in this reaction.</text>
</comment>
<comment type="catalytic activity">
    <reaction evidence="1">
        <text>L-threonylcarbamoyladenylate + adenosine(37) in tRNA = N(6)-L-threonylcarbamoyladenosine(37) in tRNA + AMP + H(+)</text>
        <dbReference type="Rhea" id="RHEA:37059"/>
        <dbReference type="Rhea" id="RHEA-COMP:10162"/>
        <dbReference type="Rhea" id="RHEA-COMP:10163"/>
        <dbReference type="ChEBI" id="CHEBI:15378"/>
        <dbReference type="ChEBI" id="CHEBI:73682"/>
        <dbReference type="ChEBI" id="CHEBI:74411"/>
        <dbReference type="ChEBI" id="CHEBI:74418"/>
        <dbReference type="ChEBI" id="CHEBI:456215"/>
        <dbReference type="EC" id="2.3.1.234"/>
    </reaction>
</comment>
<comment type="cofactor">
    <cofactor evidence="1">
        <name>Fe(2+)</name>
        <dbReference type="ChEBI" id="CHEBI:29033"/>
    </cofactor>
    <text evidence="1">Binds 1 Fe(2+) ion per subunit.</text>
</comment>
<comment type="subcellular location">
    <subcellularLocation>
        <location evidence="1">Cytoplasm</location>
    </subcellularLocation>
</comment>
<comment type="similarity">
    <text evidence="1">Belongs to the KAE1 / TsaD family.</text>
</comment>
<sequence>MKVLGIESSCDETGVAVYDTALSGVPALRAHAVYSQIALHAEYGGVVPELASRDHVRKLLPLIRQTLGEAGVGIDELDGVAYTAGPGLVGALLVGAGVARSLAWALDVPAIGVHHMEGHLLAPLMEDDPPEPPFVALLVSGGHTQLVSVKALGSYEVLGETLDDAAGEAFDKTAKMMGLPYPGGPQLAALAETGTPGRYRFARPMTDRPGLDFSFSGLKTQVLLAWRSSDQSDTTRADIARGFEDAVVDTLVIKCLRALDAAECNTLVVAGGVGVNKRLRARLQEAAQRRGGRVCFPRPALCTDNGAMIAFAGALRLQAGERADAAVHVTPRWDMAALPPLAAGRDSGVEIREW</sequence>
<gene>
    <name evidence="1" type="primary">tsaD</name>
    <name type="synonym">gcp</name>
    <name type="ordered locus">XOO4125</name>
</gene>
<proteinExistence type="inferred from homology"/>
<name>TSAD_XANOR</name>
<keyword id="KW-0012">Acyltransferase</keyword>
<keyword id="KW-0963">Cytoplasm</keyword>
<keyword id="KW-0408">Iron</keyword>
<keyword id="KW-0479">Metal-binding</keyword>
<keyword id="KW-1185">Reference proteome</keyword>
<keyword id="KW-0808">Transferase</keyword>
<keyword id="KW-0819">tRNA processing</keyword>
<accession>Q5GV94</accession>